<accession>Q0WPK4</accession>
<accession>O64542</accession>
<accession>Q56X08</accession>
<organism>
    <name type="scientific">Arabidopsis thaliana</name>
    <name type="common">Mouse-ear cress</name>
    <dbReference type="NCBI Taxonomy" id="3702"/>
    <lineage>
        <taxon>Eukaryota</taxon>
        <taxon>Viridiplantae</taxon>
        <taxon>Streptophyta</taxon>
        <taxon>Embryophyta</taxon>
        <taxon>Tracheophyta</taxon>
        <taxon>Spermatophyta</taxon>
        <taxon>Magnoliopsida</taxon>
        <taxon>eudicotyledons</taxon>
        <taxon>Gunneridae</taxon>
        <taxon>Pentapetalae</taxon>
        <taxon>rosids</taxon>
        <taxon>malvids</taxon>
        <taxon>Brassicales</taxon>
        <taxon>Brassicaceae</taxon>
        <taxon>Camelineae</taxon>
        <taxon>Arabidopsis</taxon>
    </lineage>
</organism>
<sequence>MDAFGIGSSLNQAPVTQDLKKFGDNSTGNTMFDASQYAFFGNDVVEEVELGGLEEEDEILSFTGIAEDFSFDKEEVGDSRLLSDVDDLASTFSKLNREPDVYSNTGPITDRRSSQNSLAAEWTHGEELPNWYGRQILDSDAIKDDKVWSAQPFSSLDRVEQRIPDRTKLYPEPQRQLHQDHNQQQFSSEPILVPKSSFVSYPPPGSISPDQRLGHPNIPYQSGGPQMGSPNFSPFPNLQPQLPSMHHGSPQHTGNRPQFRPALPLNNLPPAQWMNRQNMHPGDSSGIMNNAMLQQPPHQNGLMPPQMQGSQNRLPHPMQPPLGHMPGMQPQLFNSHLSRSSSSGNYDGMLGFGDLREVRPGSGHGNRQNVRFPQQGFDAGVQRRYPFRSKYMSAGEIENILRMQLVATHSNDPYVDDYYHQACLAKKSAGAKLKHHFCPNHLRDLQQRARSNNEPHAFLQVEALGRVPFSSIRRPRPLLEVDPPNSAKFGNAEHKPTDKPLDQEPMLAARVYIEDGLCLLLEVDDIDRFLEFNQLQDGGHQLKQRRQALLQSLAVSLQLGDPLAKNGQSQSLDDFLFLRVISLPKGRKLLIRYLQLIFPGSDLMRIVCMAIFRHLRSLFGVLSSDPDIIKTTNKLATVINLCIQNMELGPVSTCLAAVSCSSEQAPLRPLGSPVGDGASTVLKSILDRASELIRANNFNNAGIALWRASFNEFFNMLMRYCISKYDSIMQSLQLPPHFATEISEEAAKAIVREMPIELLRSSFPHIDEQQKRILMEFLKRSMLGSQKTEPVLS</sequence>
<feature type="chain" id="PRO_0000442788" description="Protein PAT1 homolog">
    <location>
        <begin position="1"/>
        <end position="793"/>
    </location>
</feature>
<feature type="region of interest" description="Disordered" evidence="1">
    <location>
        <begin position="203"/>
        <end position="256"/>
    </location>
</feature>
<feature type="region of interest" description="Disordered" evidence="1">
    <location>
        <begin position="292"/>
        <end position="312"/>
    </location>
</feature>
<feature type="region of interest" description="Disordered" evidence="1">
    <location>
        <begin position="476"/>
        <end position="501"/>
    </location>
</feature>
<feature type="compositionally biased region" description="Polar residues" evidence="1">
    <location>
        <begin position="219"/>
        <end position="242"/>
    </location>
</feature>
<feature type="compositionally biased region" description="Basic and acidic residues" evidence="1">
    <location>
        <begin position="491"/>
        <end position="501"/>
    </location>
</feature>
<feature type="modified residue" description="Phosphoserine" evidence="2">
    <location>
        <position position="200"/>
    </location>
</feature>
<feature type="modified residue" description="Phosphoserine" evidence="2 7">
    <location>
        <position position="208"/>
    </location>
</feature>
<feature type="modified residue" description="Phosphoserine" evidence="2">
    <location>
        <position position="342"/>
    </location>
</feature>
<feature type="modified residue" description="Phosphoserine" evidence="2">
    <location>
        <position position="343"/>
    </location>
</feature>
<feature type="mutagenesis site" description="Abolishes phosphorylation by MPK4." evidence="2">
    <original>S</original>
    <variation>A</variation>
    <location>
        <position position="208"/>
    </location>
</feature>
<feature type="sequence conflict" description="In Ref. 4; BAD94175." evidence="4" ref="4">
    <original>D</original>
    <variation>E</variation>
    <location>
        <position position="527"/>
    </location>
</feature>
<feature type="sequence conflict" description="In Ref. 4; BAD94175." evidence="4" ref="4">
    <original>N</original>
    <variation>K</variation>
    <location>
        <position position="711"/>
    </location>
</feature>
<dbReference type="EMBL" id="AC002986">
    <property type="protein sequence ID" value="AAC17049.1"/>
    <property type="status" value="ALT_SEQ"/>
    <property type="molecule type" value="Genomic_DNA"/>
</dbReference>
<dbReference type="EMBL" id="CP002684">
    <property type="protein sequence ID" value="AEE36202.1"/>
    <property type="molecule type" value="Genomic_DNA"/>
</dbReference>
<dbReference type="EMBL" id="CP002684">
    <property type="protein sequence ID" value="AEE36203.1"/>
    <property type="molecule type" value="Genomic_DNA"/>
</dbReference>
<dbReference type="EMBL" id="CP002684">
    <property type="protein sequence ID" value="ANM57835.1"/>
    <property type="molecule type" value="Genomic_DNA"/>
</dbReference>
<dbReference type="EMBL" id="AK318693">
    <property type="protein sequence ID" value="BAH56808.1"/>
    <property type="molecule type" value="mRNA"/>
</dbReference>
<dbReference type="EMBL" id="AK229063">
    <property type="protein sequence ID" value="BAF00945.1"/>
    <property type="molecule type" value="mRNA"/>
</dbReference>
<dbReference type="EMBL" id="AK221871">
    <property type="protein sequence ID" value="BAD94175.1"/>
    <property type="molecule type" value="mRNA"/>
</dbReference>
<dbReference type="PIR" id="T01046">
    <property type="entry name" value="T01046"/>
</dbReference>
<dbReference type="RefSeq" id="NP_001320315.1">
    <property type="nucleotide sequence ID" value="NM_001334869.1"/>
</dbReference>
<dbReference type="RefSeq" id="NP_565199.1">
    <property type="nucleotide sequence ID" value="NM_106560.4"/>
</dbReference>
<dbReference type="RefSeq" id="NP_849904.1">
    <property type="nucleotide sequence ID" value="NM_179573.4"/>
</dbReference>
<dbReference type="ComplexPortal" id="CPX-1308">
    <property type="entry name" value="LSM1-7-PAT1 complex, variant LSM1A-LSM3A-LSM6A-PAT1"/>
</dbReference>
<dbReference type="ComplexPortal" id="CPX-1345">
    <property type="entry name" value="LSM1-7-PAT1 complex, variant LSM1A-LSM3B-LSM6B-PAT1"/>
</dbReference>
<dbReference type="ComplexPortal" id="CPX-1346">
    <property type="entry name" value="LSM1-7-PAT1 complex, variant LSM1A-LSM3B-LSM6A-PAT1"/>
</dbReference>
<dbReference type="ComplexPortal" id="CPX-1347">
    <property type="entry name" value="LSM1-7-PAT1 complex, variant LSM1B-LSM3A-LSM6A-PAT1"/>
</dbReference>
<dbReference type="ComplexPortal" id="CPX-1348">
    <property type="entry name" value="LSM1-7-PAT1 complex, variant LSM1B-LSM3B-LSM6A-PAT1"/>
</dbReference>
<dbReference type="ComplexPortal" id="CPX-1349">
    <property type="entry name" value="LSM1-7-PAT1 complex, variant LSM1B-LSM3B-LSM6B-PAT1"/>
</dbReference>
<dbReference type="ComplexPortal" id="CPX-1350">
    <property type="entry name" value="LSM1-7-PAT1 complex, variant LSM1B-LSM3A-LSM6B-PAT1"/>
</dbReference>
<dbReference type="ComplexPortal" id="CPX-1351">
    <property type="entry name" value="LSM1-7-PAT1 complex, variant LSM1A-LSM3A-LSM6B-PAT1"/>
</dbReference>
<dbReference type="FunCoup" id="Q0WPK4">
    <property type="interactions" value="2348"/>
</dbReference>
<dbReference type="STRING" id="3702.Q0WPK4"/>
<dbReference type="GlyGen" id="Q0WPK4">
    <property type="glycosylation" value="4 sites, 1 O-linked glycan (4 sites)"/>
</dbReference>
<dbReference type="iPTMnet" id="Q0WPK4"/>
<dbReference type="PaxDb" id="3702-AT1G79090.2"/>
<dbReference type="ProteomicsDB" id="236325"/>
<dbReference type="EnsemblPlants" id="AT1G79090.1">
    <property type="protein sequence ID" value="AT1G79090.1"/>
    <property type="gene ID" value="AT1G79090"/>
</dbReference>
<dbReference type="EnsemblPlants" id="AT1G79090.2">
    <property type="protein sequence ID" value="AT1G79090.2"/>
    <property type="gene ID" value="AT1G79090"/>
</dbReference>
<dbReference type="EnsemblPlants" id="AT1G79090.3">
    <property type="protein sequence ID" value="AT1G79090.3"/>
    <property type="gene ID" value="AT1G79090"/>
</dbReference>
<dbReference type="GeneID" id="844250"/>
<dbReference type="Gramene" id="AT1G79090.1">
    <property type="protein sequence ID" value="AT1G79090.1"/>
    <property type="gene ID" value="AT1G79090"/>
</dbReference>
<dbReference type="Gramene" id="AT1G79090.2">
    <property type="protein sequence ID" value="AT1G79090.2"/>
    <property type="gene ID" value="AT1G79090"/>
</dbReference>
<dbReference type="Gramene" id="AT1G79090.3">
    <property type="protein sequence ID" value="AT1G79090.3"/>
    <property type="gene ID" value="AT1G79090"/>
</dbReference>
<dbReference type="KEGG" id="ath:AT1G79090"/>
<dbReference type="Araport" id="AT1G79090"/>
<dbReference type="TAIR" id="AT1G79090">
    <property type="gene designation" value="PAT1"/>
</dbReference>
<dbReference type="eggNOG" id="ENOG502QQ60">
    <property type="taxonomic scope" value="Eukaryota"/>
</dbReference>
<dbReference type="HOGENOM" id="CLU_021130_0_0_1"/>
<dbReference type="InParanoid" id="Q0WPK4"/>
<dbReference type="OMA" id="QHSSQMM"/>
<dbReference type="OrthoDB" id="74835at2759"/>
<dbReference type="PhylomeDB" id="Q0WPK4"/>
<dbReference type="CD-CODE" id="4299E36E">
    <property type="entry name" value="Nucleolus"/>
</dbReference>
<dbReference type="PRO" id="PR:Q0WPK4"/>
<dbReference type="Proteomes" id="UP000006548">
    <property type="component" value="Chromosome 1"/>
</dbReference>
<dbReference type="ExpressionAtlas" id="Q0WPK4">
    <property type="expression patterns" value="baseline and differential"/>
</dbReference>
<dbReference type="GO" id="GO:1990726">
    <property type="term" value="C:Lsm1-7-Pat1 complex"/>
    <property type="evidence" value="ECO:0000303"/>
    <property type="project" value="ComplexPortal"/>
</dbReference>
<dbReference type="GO" id="GO:0000932">
    <property type="term" value="C:P-body"/>
    <property type="evidence" value="ECO:0000314"/>
    <property type="project" value="TAIR"/>
</dbReference>
<dbReference type="GO" id="GO:0003729">
    <property type="term" value="F:mRNA binding"/>
    <property type="evidence" value="ECO:0000314"/>
    <property type="project" value="TAIR"/>
</dbReference>
<dbReference type="GO" id="GO:0000290">
    <property type="term" value="P:deadenylation-dependent decapping of nuclear-transcribed mRNA"/>
    <property type="evidence" value="ECO:0000315"/>
    <property type="project" value="TAIR"/>
</dbReference>
<dbReference type="GO" id="GO:0045087">
    <property type="term" value="P:innate immune response"/>
    <property type="evidence" value="ECO:0000315"/>
    <property type="project" value="TAIR"/>
</dbReference>
<dbReference type="GO" id="GO:0006397">
    <property type="term" value="P:mRNA processing"/>
    <property type="evidence" value="ECO:0007669"/>
    <property type="project" value="UniProtKB-KW"/>
</dbReference>
<dbReference type="InterPro" id="IPR039900">
    <property type="entry name" value="Pat1-like"/>
</dbReference>
<dbReference type="PANTHER" id="PTHR21551:SF0">
    <property type="entry name" value="PROTEIN ASSOCIATED WITH TOPO II RELATED-1, ISOFORM A"/>
    <property type="match status" value="1"/>
</dbReference>
<dbReference type="PANTHER" id="PTHR21551">
    <property type="entry name" value="TOPOISOMERASE II-ASSOCIATED PROTEIN PAT1"/>
    <property type="match status" value="1"/>
</dbReference>
<gene>
    <name evidence="3" type="primary">PAT1</name>
    <name evidence="5" type="ordered locus">At1g79090</name>
    <name evidence="6" type="ORF">YUP8H12R.29</name>
</gene>
<reference key="1">
    <citation type="journal article" date="2000" name="Nature">
        <title>Sequence and analysis of chromosome 1 of the plant Arabidopsis thaliana.</title>
        <authorList>
            <person name="Theologis A."/>
            <person name="Ecker J.R."/>
            <person name="Palm C.J."/>
            <person name="Federspiel N.A."/>
            <person name="Kaul S."/>
            <person name="White O."/>
            <person name="Alonso J."/>
            <person name="Altafi H."/>
            <person name="Araujo R."/>
            <person name="Bowman C.L."/>
            <person name="Brooks S.Y."/>
            <person name="Buehler E."/>
            <person name="Chan A."/>
            <person name="Chao Q."/>
            <person name="Chen H."/>
            <person name="Cheuk R.F."/>
            <person name="Chin C.W."/>
            <person name="Chung M.K."/>
            <person name="Conn L."/>
            <person name="Conway A.B."/>
            <person name="Conway A.R."/>
            <person name="Creasy T.H."/>
            <person name="Dewar K."/>
            <person name="Dunn P."/>
            <person name="Etgu P."/>
            <person name="Feldblyum T.V."/>
            <person name="Feng J.-D."/>
            <person name="Fong B."/>
            <person name="Fujii C.Y."/>
            <person name="Gill J.E."/>
            <person name="Goldsmith A.D."/>
            <person name="Haas B."/>
            <person name="Hansen N.F."/>
            <person name="Hughes B."/>
            <person name="Huizar L."/>
            <person name="Hunter J.L."/>
            <person name="Jenkins J."/>
            <person name="Johnson-Hopson C."/>
            <person name="Khan S."/>
            <person name="Khaykin E."/>
            <person name="Kim C.J."/>
            <person name="Koo H.L."/>
            <person name="Kremenetskaia I."/>
            <person name="Kurtz D.B."/>
            <person name="Kwan A."/>
            <person name="Lam B."/>
            <person name="Langin-Hooper S."/>
            <person name="Lee A."/>
            <person name="Lee J.M."/>
            <person name="Lenz C.A."/>
            <person name="Li J.H."/>
            <person name="Li Y.-P."/>
            <person name="Lin X."/>
            <person name="Liu S.X."/>
            <person name="Liu Z.A."/>
            <person name="Luros J.S."/>
            <person name="Maiti R."/>
            <person name="Marziali A."/>
            <person name="Militscher J."/>
            <person name="Miranda M."/>
            <person name="Nguyen M."/>
            <person name="Nierman W.C."/>
            <person name="Osborne B.I."/>
            <person name="Pai G."/>
            <person name="Peterson J."/>
            <person name="Pham P.K."/>
            <person name="Rizzo M."/>
            <person name="Rooney T."/>
            <person name="Rowley D."/>
            <person name="Sakano H."/>
            <person name="Salzberg S.L."/>
            <person name="Schwartz J.R."/>
            <person name="Shinn P."/>
            <person name="Southwick A.M."/>
            <person name="Sun H."/>
            <person name="Tallon L.J."/>
            <person name="Tambunga G."/>
            <person name="Toriumi M.J."/>
            <person name="Town C.D."/>
            <person name="Utterback T."/>
            <person name="Van Aken S."/>
            <person name="Vaysberg M."/>
            <person name="Vysotskaia V.S."/>
            <person name="Walker M."/>
            <person name="Wu D."/>
            <person name="Yu G."/>
            <person name="Fraser C.M."/>
            <person name="Venter J.C."/>
            <person name="Davis R.W."/>
        </authorList>
    </citation>
    <scope>NUCLEOTIDE SEQUENCE [LARGE SCALE GENOMIC DNA]</scope>
    <source>
        <strain>cv. Columbia</strain>
    </source>
</reference>
<reference key="2">
    <citation type="journal article" date="2017" name="Plant J.">
        <title>Araport11: a complete reannotation of the Arabidopsis thaliana reference genome.</title>
        <authorList>
            <person name="Cheng C.Y."/>
            <person name="Krishnakumar V."/>
            <person name="Chan A.P."/>
            <person name="Thibaud-Nissen F."/>
            <person name="Schobel S."/>
            <person name="Town C.D."/>
        </authorList>
    </citation>
    <scope>GENOME REANNOTATION</scope>
    <source>
        <strain>cv. Columbia</strain>
    </source>
</reference>
<reference key="3">
    <citation type="journal article" date="2009" name="DNA Res.">
        <title>Analysis of multiple occurrences of alternative splicing events in Arabidopsis thaliana using novel sequenced full-length cDNAs.</title>
        <authorList>
            <person name="Iida K."/>
            <person name="Fukami-Kobayashi K."/>
            <person name="Toyoda A."/>
            <person name="Sakaki Y."/>
            <person name="Kobayashi M."/>
            <person name="Seki M."/>
            <person name="Shinozaki K."/>
        </authorList>
    </citation>
    <scope>NUCLEOTIDE SEQUENCE [LARGE SCALE MRNA]</scope>
    <source>
        <strain>cv. Columbia</strain>
    </source>
</reference>
<reference key="4">
    <citation type="submission" date="2006-07" db="EMBL/GenBank/DDBJ databases">
        <title>Large-scale analysis of RIKEN Arabidopsis full-length (RAFL) cDNAs.</title>
        <authorList>
            <person name="Totoki Y."/>
            <person name="Seki M."/>
            <person name="Ishida J."/>
            <person name="Nakajima M."/>
            <person name="Enju A."/>
            <person name="Kamiya A."/>
            <person name="Narusaka M."/>
            <person name="Shin-i T."/>
            <person name="Nakagawa M."/>
            <person name="Sakamoto N."/>
            <person name="Oishi K."/>
            <person name="Kohara Y."/>
            <person name="Kobayashi M."/>
            <person name="Toyoda A."/>
            <person name="Sakaki Y."/>
            <person name="Sakurai T."/>
            <person name="Iida K."/>
            <person name="Akiyama K."/>
            <person name="Satou M."/>
            <person name="Toyoda T."/>
            <person name="Konagaya A."/>
            <person name="Carninci P."/>
            <person name="Kawai J."/>
            <person name="Hayashizaki Y."/>
            <person name="Shinozaki K."/>
        </authorList>
    </citation>
    <scope>NUCLEOTIDE SEQUENCE [LARGE SCALE MRNA]</scope>
    <source>
        <strain>cv. Columbia</strain>
    </source>
</reference>
<reference key="5">
    <citation type="journal article" date="2009" name="J. Proteomics">
        <title>Phosphoproteomic analysis of nuclei-enriched fractions from Arabidopsis thaliana.</title>
        <authorList>
            <person name="Jones A.M.E."/>
            <person name="MacLean D."/>
            <person name="Studholme D.J."/>
            <person name="Serna-Sanz A."/>
            <person name="Andreasson E."/>
            <person name="Rathjen J.P."/>
            <person name="Peck S.C."/>
        </authorList>
    </citation>
    <scope>IDENTIFICATION BY MASS SPECTROMETRY [LARGE SCALE ANALYSIS]</scope>
    <source>
        <strain>cv. Columbia</strain>
    </source>
</reference>
<reference key="6">
    <citation type="journal article" date="2009" name="Plant Physiol.">
        <title>Large-scale Arabidopsis phosphoproteome profiling reveals novel chloroplast kinase substrates and phosphorylation networks.</title>
        <authorList>
            <person name="Reiland S."/>
            <person name="Messerli G."/>
            <person name="Baerenfaller K."/>
            <person name="Gerrits B."/>
            <person name="Endler A."/>
            <person name="Grossmann J."/>
            <person name="Gruissem W."/>
            <person name="Baginsky S."/>
        </authorList>
    </citation>
    <scope>PHOSPHORYLATION [LARGE SCALE ANALYSIS] AT SER-208</scope>
    <scope>IDENTIFICATION BY MASS SPECTROMETRY [LARGE SCALE ANALYSIS]</scope>
</reference>
<reference key="7">
    <citation type="journal article" date="2015" name="EMBO J.">
        <title>The mRNA decay factor PAT1 functions in a pathway including MAP kinase 4 and immune receptor SUMM2.</title>
        <authorList>
            <person name="Roux M.E."/>
            <person name="Rasmussen M.W."/>
            <person name="Palma K."/>
            <person name="Lolle S."/>
            <person name="Regue A.M."/>
            <person name="Bethke G."/>
            <person name="Glazebrook J."/>
            <person name="Zhang W."/>
            <person name="Sieburth L."/>
            <person name="Larsen M.R."/>
            <person name="Mundy J."/>
            <person name="Petersen M."/>
        </authorList>
    </citation>
    <scope>FUNCTION</scope>
    <scope>INTERACTION WITH MPK4 AND SUMM2</scope>
    <scope>SUBCELLULAR LOCATION</scope>
    <scope>INDUCTION BY FLAGELLIN</scope>
    <scope>PHOSPHORYLATION AT SER-200; SER-208; SER-342 AND SER-343</scope>
    <scope>MUTAGENESIS OF SER-208</scope>
    <scope>DISRUPTION PHENOTYPE</scope>
</reference>
<protein>
    <recommendedName>
        <fullName evidence="4">Protein PAT1 homolog</fullName>
        <shortName evidence="3">AtPAT1</shortName>
    </recommendedName>
</protein>
<comment type="function">
    <text evidence="2">Activator of mRNA decapping. Involved in mRNA decay via decapping. Involved in disease resistance in response to biotrophic and necrotrophic pathogens. Is part of a signaling pathway including MPK4 and the disease resistance protein SUMM2.</text>
</comment>
<comment type="subunit">
    <text evidence="2">Interacts with MPK4 and SUMM2.</text>
</comment>
<comment type="subcellular location">
    <subcellularLocation>
        <location evidence="2">Cytoplasm</location>
        <location evidence="2">P-body</location>
    </subcellularLocation>
</comment>
<comment type="induction">
    <text evidence="2">Accumulates in response to flg22 (at protein levels).</text>
</comment>
<comment type="PTM">
    <text evidence="2">Phosphorylated at Ser-208 by MPK4 upon flg22 elicitation. Phosphorylated at Ser-200, Ser-342 and Ser-343 upon flg22 elicitation.</text>
</comment>
<comment type="disruption phenotype">
    <text evidence="2">Serrated leaf and reduced plant size. Constitutive expression of the defense-related gene PR1 and enhanced resistance to the bacterial pathogen Pseudomonas syringae pv tomato strain DC3000.</text>
</comment>
<comment type="sequence caution" evidence="4">
    <conflict type="erroneous gene model prediction">
        <sequence resource="EMBL-CDS" id="AAC17049"/>
    </conflict>
</comment>
<name>PAT1H_ARATH</name>
<evidence type="ECO:0000256" key="1">
    <source>
        <dbReference type="SAM" id="MobiDB-lite"/>
    </source>
</evidence>
<evidence type="ECO:0000269" key="2">
    <source>
    </source>
</evidence>
<evidence type="ECO:0000303" key="3">
    <source>
    </source>
</evidence>
<evidence type="ECO:0000305" key="4"/>
<evidence type="ECO:0000312" key="5">
    <source>
        <dbReference type="Araport" id="AT1G79090"/>
    </source>
</evidence>
<evidence type="ECO:0000312" key="6">
    <source>
        <dbReference type="EMBL" id="AAC17049.1"/>
    </source>
</evidence>
<evidence type="ECO:0007744" key="7">
    <source>
    </source>
</evidence>
<keyword id="KW-0963">Cytoplasm</keyword>
<keyword id="KW-0507">mRNA processing</keyword>
<keyword id="KW-0597">Phosphoprotein</keyword>
<keyword id="KW-0611">Plant defense</keyword>
<keyword id="KW-1185">Reference proteome</keyword>
<proteinExistence type="evidence at protein level"/>